<protein>
    <recommendedName>
        <fullName evidence="1">ATP synthase epsilon chain</fullName>
    </recommendedName>
    <alternativeName>
        <fullName evidence="1">ATP synthase F1 sector epsilon subunit</fullName>
    </alternativeName>
    <alternativeName>
        <fullName evidence="1">F-ATPase epsilon subunit</fullName>
    </alternativeName>
</protein>
<proteinExistence type="inferred from homology"/>
<comment type="function">
    <text evidence="1">Produces ATP from ADP in the presence of a proton gradient across the membrane.</text>
</comment>
<comment type="subunit">
    <text>F-type ATPases have 2 components, CF(1) - the catalytic core - and CF(0) - the membrane proton channel. CF(1) has five subunits: alpha(3), beta(3), gamma(1), delta(1), epsilon(1). CF(0) has three main subunits: a, b and c.</text>
</comment>
<comment type="subcellular location">
    <subcellularLocation>
        <location evidence="1">Cell membrane</location>
        <topology evidence="1">Peripheral membrane protein</topology>
    </subcellularLocation>
</comment>
<comment type="similarity">
    <text evidence="1">Belongs to the ATPase epsilon chain family.</text>
</comment>
<reference key="1">
    <citation type="journal article" date="2004" name="Proc. Natl. Acad. Sci. U.S.A.">
        <title>The genome sequence of the probiotic intestinal bacterium Lactobacillus johnsonii NCC 533.</title>
        <authorList>
            <person name="Pridmore R.D."/>
            <person name="Berger B."/>
            <person name="Desiere F."/>
            <person name="Vilanova D."/>
            <person name="Barretto C."/>
            <person name="Pittet A.-C."/>
            <person name="Zwahlen M.-C."/>
            <person name="Rouvet M."/>
            <person name="Altermann E."/>
            <person name="Barrangou R."/>
            <person name="Mollet B."/>
            <person name="Mercenier A."/>
            <person name="Klaenhammer T."/>
            <person name="Arigoni F."/>
            <person name="Schell M.A."/>
        </authorList>
    </citation>
    <scope>NUCLEOTIDE SEQUENCE [LARGE SCALE GENOMIC DNA]</scope>
    <source>
        <strain>CNCM I-1225 / La1 / NCC 533</strain>
    </source>
</reference>
<gene>
    <name evidence="1" type="primary">atpC</name>
    <name type="ordered locus">LJ_0941</name>
</gene>
<name>ATPE_LACJO</name>
<accession>Q74K14</accession>
<dbReference type="EMBL" id="AE017198">
    <property type="protein sequence ID" value="AAS08762.1"/>
    <property type="molecule type" value="Genomic_DNA"/>
</dbReference>
<dbReference type="RefSeq" id="WP_004897606.1">
    <property type="nucleotide sequence ID" value="NC_005362.1"/>
</dbReference>
<dbReference type="SMR" id="Q74K14"/>
<dbReference type="KEGG" id="ljo:LJ_0941"/>
<dbReference type="eggNOG" id="COG0355">
    <property type="taxonomic scope" value="Bacteria"/>
</dbReference>
<dbReference type="HOGENOM" id="CLU_084338_1_0_9"/>
<dbReference type="Proteomes" id="UP000000581">
    <property type="component" value="Chromosome"/>
</dbReference>
<dbReference type="GO" id="GO:0005886">
    <property type="term" value="C:plasma membrane"/>
    <property type="evidence" value="ECO:0007669"/>
    <property type="project" value="UniProtKB-SubCell"/>
</dbReference>
<dbReference type="GO" id="GO:0045259">
    <property type="term" value="C:proton-transporting ATP synthase complex"/>
    <property type="evidence" value="ECO:0007669"/>
    <property type="project" value="UniProtKB-KW"/>
</dbReference>
<dbReference type="GO" id="GO:0005524">
    <property type="term" value="F:ATP binding"/>
    <property type="evidence" value="ECO:0007669"/>
    <property type="project" value="UniProtKB-UniRule"/>
</dbReference>
<dbReference type="GO" id="GO:0046933">
    <property type="term" value="F:proton-transporting ATP synthase activity, rotational mechanism"/>
    <property type="evidence" value="ECO:0007669"/>
    <property type="project" value="UniProtKB-UniRule"/>
</dbReference>
<dbReference type="CDD" id="cd12152">
    <property type="entry name" value="F1-ATPase_delta"/>
    <property type="match status" value="1"/>
</dbReference>
<dbReference type="Gene3D" id="1.20.5.440">
    <property type="entry name" value="ATP synthase delta/epsilon subunit, C-terminal domain"/>
    <property type="match status" value="1"/>
</dbReference>
<dbReference type="Gene3D" id="2.60.15.10">
    <property type="entry name" value="F0F1 ATP synthase delta/epsilon subunit, N-terminal"/>
    <property type="match status" value="1"/>
</dbReference>
<dbReference type="HAMAP" id="MF_00530">
    <property type="entry name" value="ATP_synth_epsil_bac"/>
    <property type="match status" value="1"/>
</dbReference>
<dbReference type="InterPro" id="IPR036794">
    <property type="entry name" value="ATP_F1_dsu/esu_C_sf"/>
</dbReference>
<dbReference type="InterPro" id="IPR001469">
    <property type="entry name" value="ATP_synth_F1_dsu/esu"/>
</dbReference>
<dbReference type="InterPro" id="IPR020546">
    <property type="entry name" value="ATP_synth_F1_dsu/esu_N"/>
</dbReference>
<dbReference type="InterPro" id="IPR020547">
    <property type="entry name" value="ATP_synth_F1_esu_C"/>
</dbReference>
<dbReference type="InterPro" id="IPR036771">
    <property type="entry name" value="ATPsynth_dsu/esu_N"/>
</dbReference>
<dbReference type="NCBIfam" id="TIGR01216">
    <property type="entry name" value="ATP_synt_epsi"/>
    <property type="match status" value="1"/>
</dbReference>
<dbReference type="NCBIfam" id="NF001846">
    <property type="entry name" value="PRK00571.1-3"/>
    <property type="match status" value="1"/>
</dbReference>
<dbReference type="PANTHER" id="PTHR13822">
    <property type="entry name" value="ATP SYNTHASE DELTA/EPSILON CHAIN"/>
    <property type="match status" value="1"/>
</dbReference>
<dbReference type="PANTHER" id="PTHR13822:SF10">
    <property type="entry name" value="ATP SYNTHASE EPSILON CHAIN, CHLOROPLASTIC"/>
    <property type="match status" value="1"/>
</dbReference>
<dbReference type="Pfam" id="PF00401">
    <property type="entry name" value="ATP-synt_DE"/>
    <property type="match status" value="1"/>
</dbReference>
<dbReference type="Pfam" id="PF02823">
    <property type="entry name" value="ATP-synt_DE_N"/>
    <property type="match status" value="1"/>
</dbReference>
<dbReference type="SUPFAM" id="SSF46604">
    <property type="entry name" value="Epsilon subunit of F1F0-ATP synthase C-terminal domain"/>
    <property type="match status" value="1"/>
</dbReference>
<dbReference type="SUPFAM" id="SSF51344">
    <property type="entry name" value="Epsilon subunit of F1F0-ATP synthase N-terminal domain"/>
    <property type="match status" value="1"/>
</dbReference>
<feature type="chain" id="PRO_0000265828" description="ATP synthase epsilon chain">
    <location>
        <begin position="1"/>
        <end position="146"/>
    </location>
</feature>
<feature type="region of interest" description="Disordered" evidence="2">
    <location>
        <begin position="103"/>
        <end position="122"/>
    </location>
</feature>
<keyword id="KW-0066">ATP synthesis</keyword>
<keyword id="KW-1003">Cell membrane</keyword>
<keyword id="KW-0139">CF(1)</keyword>
<keyword id="KW-0375">Hydrogen ion transport</keyword>
<keyword id="KW-0406">Ion transport</keyword>
<keyword id="KW-0472">Membrane</keyword>
<keyword id="KW-0813">Transport</keyword>
<organism>
    <name type="scientific">Lactobacillus johnsonii (strain CNCM I-12250 / La1 / NCC 533)</name>
    <dbReference type="NCBI Taxonomy" id="257314"/>
    <lineage>
        <taxon>Bacteria</taxon>
        <taxon>Bacillati</taxon>
        <taxon>Bacillota</taxon>
        <taxon>Bacilli</taxon>
        <taxon>Lactobacillales</taxon>
        <taxon>Lactobacillaceae</taxon>
        <taxon>Lactobacillus</taxon>
    </lineage>
</organism>
<evidence type="ECO:0000255" key="1">
    <source>
        <dbReference type="HAMAP-Rule" id="MF_00530"/>
    </source>
</evidence>
<evidence type="ECO:0000256" key="2">
    <source>
        <dbReference type="SAM" id="MobiDB-lite"/>
    </source>
</evidence>
<sequence>MADPEKIIKVSVVTPDGIVYSHNATMVAMRAIDGDRAIMYDHLPIVTPLAIGEVRVKRTHEMNDRIDHIAVNGGYIEFSNNEATIIADSAERARNIDVKRAQSAKKRAEQHMQEAKEKHNEREMLEAEIALRRAVNRLHVRENYGK</sequence>